<dbReference type="EC" id="3.5.1.5" evidence="1"/>
<dbReference type="EMBL" id="CP001339">
    <property type="protein sequence ID" value="ACL74172.1"/>
    <property type="molecule type" value="Genomic_DNA"/>
</dbReference>
<dbReference type="RefSeq" id="WP_012639634.1">
    <property type="nucleotide sequence ID" value="NC_011901.1"/>
</dbReference>
<dbReference type="SMR" id="B8GQ25"/>
<dbReference type="STRING" id="396588.Tgr7_3103"/>
<dbReference type="KEGG" id="tgr:Tgr7_3103"/>
<dbReference type="eggNOG" id="COG0832">
    <property type="taxonomic scope" value="Bacteria"/>
</dbReference>
<dbReference type="HOGENOM" id="CLU_129707_1_1_6"/>
<dbReference type="OrthoDB" id="9797217at2"/>
<dbReference type="UniPathway" id="UPA00258">
    <property type="reaction ID" value="UER00370"/>
</dbReference>
<dbReference type="Proteomes" id="UP000002383">
    <property type="component" value="Chromosome"/>
</dbReference>
<dbReference type="GO" id="GO:0035550">
    <property type="term" value="C:urease complex"/>
    <property type="evidence" value="ECO:0007669"/>
    <property type="project" value="InterPro"/>
</dbReference>
<dbReference type="GO" id="GO:0009039">
    <property type="term" value="F:urease activity"/>
    <property type="evidence" value="ECO:0007669"/>
    <property type="project" value="UniProtKB-UniRule"/>
</dbReference>
<dbReference type="GO" id="GO:0043419">
    <property type="term" value="P:urea catabolic process"/>
    <property type="evidence" value="ECO:0007669"/>
    <property type="project" value="UniProtKB-UniRule"/>
</dbReference>
<dbReference type="CDD" id="cd00407">
    <property type="entry name" value="Urease_beta"/>
    <property type="match status" value="1"/>
</dbReference>
<dbReference type="FunFam" id="2.10.150.10:FF:000001">
    <property type="entry name" value="Urease subunit beta"/>
    <property type="match status" value="1"/>
</dbReference>
<dbReference type="Gene3D" id="2.10.150.10">
    <property type="entry name" value="Urease, beta subunit"/>
    <property type="match status" value="1"/>
</dbReference>
<dbReference type="HAMAP" id="MF_01954">
    <property type="entry name" value="Urease_beta"/>
    <property type="match status" value="1"/>
</dbReference>
<dbReference type="InterPro" id="IPR002019">
    <property type="entry name" value="Urease_beta-like"/>
</dbReference>
<dbReference type="InterPro" id="IPR036461">
    <property type="entry name" value="Urease_betasu_sf"/>
</dbReference>
<dbReference type="InterPro" id="IPR050069">
    <property type="entry name" value="Urease_subunit"/>
</dbReference>
<dbReference type="NCBIfam" id="NF009682">
    <property type="entry name" value="PRK13203.1"/>
    <property type="match status" value="1"/>
</dbReference>
<dbReference type="NCBIfam" id="TIGR00192">
    <property type="entry name" value="urease_beta"/>
    <property type="match status" value="1"/>
</dbReference>
<dbReference type="PANTHER" id="PTHR33569">
    <property type="entry name" value="UREASE"/>
    <property type="match status" value="1"/>
</dbReference>
<dbReference type="PANTHER" id="PTHR33569:SF1">
    <property type="entry name" value="UREASE"/>
    <property type="match status" value="1"/>
</dbReference>
<dbReference type="Pfam" id="PF00699">
    <property type="entry name" value="Urease_beta"/>
    <property type="match status" value="1"/>
</dbReference>
<dbReference type="SUPFAM" id="SSF51278">
    <property type="entry name" value="Urease, beta-subunit"/>
    <property type="match status" value="1"/>
</dbReference>
<proteinExistence type="inferred from homology"/>
<evidence type="ECO:0000255" key="1">
    <source>
        <dbReference type="HAMAP-Rule" id="MF_01954"/>
    </source>
</evidence>
<feature type="chain" id="PRO_1000188945" description="Urease subunit beta">
    <location>
        <begin position="1"/>
        <end position="112"/>
    </location>
</feature>
<protein>
    <recommendedName>
        <fullName evidence="1">Urease subunit beta</fullName>
        <ecNumber evidence="1">3.5.1.5</ecNumber>
    </recommendedName>
    <alternativeName>
        <fullName evidence="1">Urea amidohydrolase subunit beta</fullName>
    </alternativeName>
</protein>
<organism>
    <name type="scientific">Thioalkalivibrio sulfidiphilus (strain HL-EbGR7)</name>
    <dbReference type="NCBI Taxonomy" id="396588"/>
    <lineage>
        <taxon>Bacteria</taxon>
        <taxon>Pseudomonadati</taxon>
        <taxon>Pseudomonadota</taxon>
        <taxon>Gammaproteobacteria</taxon>
        <taxon>Chromatiales</taxon>
        <taxon>Ectothiorhodospiraceae</taxon>
        <taxon>Thioalkalivibrio</taxon>
    </lineage>
</organism>
<keyword id="KW-0963">Cytoplasm</keyword>
<keyword id="KW-0378">Hydrolase</keyword>
<keyword id="KW-1185">Reference proteome</keyword>
<reference key="1">
    <citation type="journal article" date="2011" name="Stand. Genomic Sci.">
        <title>Complete genome sequence of 'Thioalkalivibrio sulfidophilus' HL-EbGr7.</title>
        <authorList>
            <person name="Muyzer G."/>
            <person name="Sorokin D.Y."/>
            <person name="Mavromatis K."/>
            <person name="Lapidus A."/>
            <person name="Clum A."/>
            <person name="Ivanova N."/>
            <person name="Pati A."/>
            <person name="d'Haeseleer P."/>
            <person name="Woyke T."/>
            <person name="Kyrpides N.C."/>
        </authorList>
    </citation>
    <scope>NUCLEOTIDE SEQUENCE [LARGE SCALE GENOMIC DNA]</scope>
    <source>
        <strain>HL-EbGR7</strain>
    </source>
</reference>
<comment type="catalytic activity">
    <reaction evidence="1">
        <text>urea + 2 H2O + H(+) = hydrogencarbonate + 2 NH4(+)</text>
        <dbReference type="Rhea" id="RHEA:20557"/>
        <dbReference type="ChEBI" id="CHEBI:15377"/>
        <dbReference type="ChEBI" id="CHEBI:15378"/>
        <dbReference type="ChEBI" id="CHEBI:16199"/>
        <dbReference type="ChEBI" id="CHEBI:17544"/>
        <dbReference type="ChEBI" id="CHEBI:28938"/>
        <dbReference type="EC" id="3.5.1.5"/>
    </reaction>
</comment>
<comment type="pathway">
    <text evidence="1">Nitrogen metabolism; urea degradation; CO(2) and NH(3) from urea (urease route): step 1/1.</text>
</comment>
<comment type="subunit">
    <text evidence="1">Heterotrimer of UreA (gamma), UreB (beta) and UreC (alpha) subunits. Three heterotrimers associate to form the active enzyme.</text>
</comment>
<comment type="subcellular location">
    <subcellularLocation>
        <location evidence="1">Cytoplasm</location>
    </subcellularLocation>
</comment>
<comment type="similarity">
    <text evidence="1">Belongs to the urease beta subunit family.</text>
</comment>
<accession>B8GQ25</accession>
<gene>
    <name evidence="1" type="primary">ureB</name>
    <name type="ordered locus">Tgr7_3103</name>
</gene>
<name>URE2_THISH</name>
<sequence length="112" mass="12319">MIPGEFLLADGEIELNADREGRPFQVTNTGDRPIQVGSHYHFHEVNNALDFDRDAALGLRLDIPAGTAVRFEPGQTRTVSLVPFAGERRVYGFQGRVMGPLPTAPDEPEQTS</sequence>